<name>MIAA_XANCP</name>
<evidence type="ECO:0000255" key="1">
    <source>
        <dbReference type="HAMAP-Rule" id="MF_00185"/>
    </source>
</evidence>
<dbReference type="EC" id="2.5.1.75" evidence="1"/>
<dbReference type="EMBL" id="AE008922">
    <property type="protein sequence ID" value="AAM41009.1"/>
    <property type="molecule type" value="Genomic_DNA"/>
</dbReference>
<dbReference type="RefSeq" id="NP_637085.1">
    <property type="nucleotide sequence ID" value="NC_003902.1"/>
</dbReference>
<dbReference type="RefSeq" id="WP_011036892.1">
    <property type="nucleotide sequence ID" value="NC_003902.1"/>
</dbReference>
<dbReference type="SMR" id="Q8P9X8"/>
<dbReference type="STRING" id="190485.XCC1715"/>
<dbReference type="EnsemblBacteria" id="AAM41009">
    <property type="protein sequence ID" value="AAM41009"/>
    <property type="gene ID" value="XCC1715"/>
</dbReference>
<dbReference type="KEGG" id="xcc:XCC1715"/>
<dbReference type="PATRIC" id="fig|190485.4.peg.1830"/>
<dbReference type="eggNOG" id="COG0324">
    <property type="taxonomic scope" value="Bacteria"/>
</dbReference>
<dbReference type="HOGENOM" id="CLU_032616_0_0_6"/>
<dbReference type="OrthoDB" id="9776390at2"/>
<dbReference type="Proteomes" id="UP000001010">
    <property type="component" value="Chromosome"/>
</dbReference>
<dbReference type="GO" id="GO:0005524">
    <property type="term" value="F:ATP binding"/>
    <property type="evidence" value="ECO:0007669"/>
    <property type="project" value="UniProtKB-UniRule"/>
</dbReference>
<dbReference type="GO" id="GO:0052381">
    <property type="term" value="F:tRNA dimethylallyltransferase activity"/>
    <property type="evidence" value="ECO:0000318"/>
    <property type="project" value="GO_Central"/>
</dbReference>
<dbReference type="GO" id="GO:0006400">
    <property type="term" value="P:tRNA modification"/>
    <property type="evidence" value="ECO:0000318"/>
    <property type="project" value="GO_Central"/>
</dbReference>
<dbReference type="FunFam" id="1.10.20.140:FF:000001">
    <property type="entry name" value="tRNA dimethylallyltransferase"/>
    <property type="match status" value="1"/>
</dbReference>
<dbReference type="Gene3D" id="1.10.20.140">
    <property type="match status" value="1"/>
</dbReference>
<dbReference type="Gene3D" id="3.40.50.300">
    <property type="entry name" value="P-loop containing nucleotide triphosphate hydrolases"/>
    <property type="match status" value="1"/>
</dbReference>
<dbReference type="HAMAP" id="MF_00185">
    <property type="entry name" value="IPP_trans"/>
    <property type="match status" value="1"/>
</dbReference>
<dbReference type="InterPro" id="IPR039657">
    <property type="entry name" value="Dimethylallyltransferase"/>
</dbReference>
<dbReference type="InterPro" id="IPR018022">
    <property type="entry name" value="IPT"/>
</dbReference>
<dbReference type="InterPro" id="IPR027417">
    <property type="entry name" value="P-loop_NTPase"/>
</dbReference>
<dbReference type="NCBIfam" id="TIGR00174">
    <property type="entry name" value="miaA"/>
    <property type="match status" value="1"/>
</dbReference>
<dbReference type="PANTHER" id="PTHR11088">
    <property type="entry name" value="TRNA DIMETHYLALLYLTRANSFERASE"/>
    <property type="match status" value="1"/>
</dbReference>
<dbReference type="PANTHER" id="PTHR11088:SF60">
    <property type="entry name" value="TRNA DIMETHYLALLYLTRANSFERASE"/>
    <property type="match status" value="1"/>
</dbReference>
<dbReference type="Pfam" id="PF01715">
    <property type="entry name" value="IPPT"/>
    <property type="match status" value="1"/>
</dbReference>
<dbReference type="SUPFAM" id="SSF52540">
    <property type="entry name" value="P-loop containing nucleoside triphosphate hydrolases"/>
    <property type="match status" value="1"/>
</dbReference>
<reference key="1">
    <citation type="journal article" date="2002" name="Nature">
        <title>Comparison of the genomes of two Xanthomonas pathogens with differing host specificities.</title>
        <authorList>
            <person name="da Silva A.C.R."/>
            <person name="Ferro J.A."/>
            <person name="Reinach F.C."/>
            <person name="Farah C.S."/>
            <person name="Furlan L.R."/>
            <person name="Quaggio R.B."/>
            <person name="Monteiro-Vitorello C.B."/>
            <person name="Van Sluys M.A."/>
            <person name="Almeida N.F. Jr."/>
            <person name="Alves L.M.C."/>
            <person name="do Amaral A.M."/>
            <person name="Bertolini M.C."/>
            <person name="Camargo L.E.A."/>
            <person name="Camarotte G."/>
            <person name="Cannavan F."/>
            <person name="Cardozo J."/>
            <person name="Chambergo F."/>
            <person name="Ciapina L.P."/>
            <person name="Cicarelli R.M.B."/>
            <person name="Coutinho L.L."/>
            <person name="Cursino-Santos J.R."/>
            <person name="El-Dorry H."/>
            <person name="Faria J.B."/>
            <person name="Ferreira A.J.S."/>
            <person name="Ferreira R.C.C."/>
            <person name="Ferro M.I.T."/>
            <person name="Formighieri E.F."/>
            <person name="Franco M.C."/>
            <person name="Greggio C.C."/>
            <person name="Gruber A."/>
            <person name="Katsuyama A.M."/>
            <person name="Kishi L.T."/>
            <person name="Leite R.P."/>
            <person name="Lemos E.G.M."/>
            <person name="Lemos M.V.F."/>
            <person name="Locali E.C."/>
            <person name="Machado M.A."/>
            <person name="Madeira A.M.B.N."/>
            <person name="Martinez-Rossi N.M."/>
            <person name="Martins E.C."/>
            <person name="Meidanis J."/>
            <person name="Menck C.F.M."/>
            <person name="Miyaki C.Y."/>
            <person name="Moon D.H."/>
            <person name="Moreira L.M."/>
            <person name="Novo M.T.M."/>
            <person name="Okura V.K."/>
            <person name="Oliveira M.C."/>
            <person name="Oliveira V.R."/>
            <person name="Pereira H.A."/>
            <person name="Rossi A."/>
            <person name="Sena J.A.D."/>
            <person name="Silva C."/>
            <person name="de Souza R.F."/>
            <person name="Spinola L.A.F."/>
            <person name="Takita M.A."/>
            <person name="Tamura R.E."/>
            <person name="Teixeira E.C."/>
            <person name="Tezza R.I.D."/>
            <person name="Trindade dos Santos M."/>
            <person name="Truffi D."/>
            <person name="Tsai S.M."/>
            <person name="White F.F."/>
            <person name="Setubal J.C."/>
            <person name="Kitajima J.P."/>
        </authorList>
    </citation>
    <scope>NUCLEOTIDE SEQUENCE [LARGE SCALE GENOMIC DNA]</scope>
    <source>
        <strain>ATCC 33913 / DSM 3586 / NCPPB 528 / LMG 568 / P 25</strain>
    </source>
</reference>
<protein>
    <recommendedName>
        <fullName evidence="1">tRNA dimethylallyltransferase</fullName>
        <ecNumber evidence="1">2.5.1.75</ecNumber>
    </recommendedName>
    <alternativeName>
        <fullName evidence="1">Dimethylallyl diphosphate:tRNA dimethylallyltransferase</fullName>
        <shortName evidence="1">DMAPP:tRNA dimethylallyltransferase</shortName>
        <shortName evidence="1">DMATase</shortName>
    </alternativeName>
    <alternativeName>
        <fullName evidence="1">Isopentenyl-diphosphate:tRNA isopentenyltransferase</fullName>
        <shortName evidence="1">IPP transferase</shortName>
        <shortName evidence="1">IPPT</shortName>
        <shortName evidence="1">IPTase</shortName>
    </alternativeName>
</protein>
<gene>
    <name evidence="1" type="primary">miaA</name>
    <name type="ordered locus">XCC1715</name>
</gene>
<keyword id="KW-0067">ATP-binding</keyword>
<keyword id="KW-0460">Magnesium</keyword>
<keyword id="KW-0547">Nucleotide-binding</keyword>
<keyword id="KW-1185">Reference proteome</keyword>
<keyword id="KW-0808">Transferase</keyword>
<keyword id="KW-0819">tRNA processing</keyword>
<proteinExistence type="inferred from homology"/>
<accession>Q8P9X8</accession>
<comment type="function">
    <text evidence="1">Catalyzes the transfer of a dimethylallyl group onto the adenine at position 37 in tRNAs that read codons beginning with uridine, leading to the formation of N6-(dimethylallyl)adenosine (i(6)A).</text>
</comment>
<comment type="catalytic activity">
    <reaction evidence="1">
        <text>adenosine(37) in tRNA + dimethylallyl diphosphate = N(6)-dimethylallyladenosine(37) in tRNA + diphosphate</text>
        <dbReference type="Rhea" id="RHEA:26482"/>
        <dbReference type="Rhea" id="RHEA-COMP:10162"/>
        <dbReference type="Rhea" id="RHEA-COMP:10375"/>
        <dbReference type="ChEBI" id="CHEBI:33019"/>
        <dbReference type="ChEBI" id="CHEBI:57623"/>
        <dbReference type="ChEBI" id="CHEBI:74411"/>
        <dbReference type="ChEBI" id="CHEBI:74415"/>
        <dbReference type="EC" id="2.5.1.75"/>
    </reaction>
</comment>
<comment type="cofactor">
    <cofactor evidence="1">
        <name>Mg(2+)</name>
        <dbReference type="ChEBI" id="CHEBI:18420"/>
    </cofactor>
</comment>
<comment type="subunit">
    <text evidence="1">Monomer.</text>
</comment>
<comment type="similarity">
    <text evidence="1">Belongs to the IPP transferase family.</text>
</comment>
<sequence>MAADQRPLAIAVMGPTASGKTALAIEAAQRWGGEIVSVDSALVYRGLDIGAAKPDAAMRAAVPHHLLDLRDPWQVYSAAEFAADARTAMAQIVARGKIPILAGGTGLYFRAALEGLAQMPEADPAVRLAIAAEAEQVGWGALHAQLARIDPVAAARIHATDRQRIQRALEVYRISGKPISYWQTRPAGPRAPVRVLKLVLAPRQRAVLHARIAMRLDVMLADGFLTEVEQLRALPQMRAVAAPLDLPAVRAVGYRQAWEYLDGAGSLAEFRDKAVQATRQLAKRQLTWLRGELDARWFDPERDRGQLEQAVAGFLGQRRTMQQPSAV</sequence>
<feature type="chain" id="PRO_0000164008" description="tRNA dimethylallyltransferase">
    <location>
        <begin position="1"/>
        <end position="327"/>
    </location>
</feature>
<feature type="region of interest" description="Interaction with substrate tRNA" evidence="1">
    <location>
        <begin position="39"/>
        <end position="42"/>
    </location>
</feature>
<feature type="region of interest" description="Interaction with substrate tRNA" evidence="1">
    <location>
        <begin position="163"/>
        <end position="167"/>
    </location>
</feature>
<feature type="binding site" evidence="1">
    <location>
        <begin position="14"/>
        <end position="21"/>
    </location>
    <ligand>
        <name>ATP</name>
        <dbReference type="ChEBI" id="CHEBI:30616"/>
    </ligand>
</feature>
<feature type="binding site" evidence="1">
    <location>
        <begin position="16"/>
        <end position="21"/>
    </location>
    <ligand>
        <name>substrate</name>
    </ligand>
</feature>
<feature type="site" description="Interaction with substrate tRNA" evidence="1">
    <location>
        <position position="105"/>
    </location>
</feature>
<feature type="site" description="Interaction with substrate tRNA" evidence="1">
    <location>
        <position position="127"/>
    </location>
</feature>
<organism>
    <name type="scientific">Xanthomonas campestris pv. campestris (strain ATCC 33913 / DSM 3586 / NCPPB 528 / LMG 568 / P 25)</name>
    <dbReference type="NCBI Taxonomy" id="190485"/>
    <lineage>
        <taxon>Bacteria</taxon>
        <taxon>Pseudomonadati</taxon>
        <taxon>Pseudomonadota</taxon>
        <taxon>Gammaproteobacteria</taxon>
        <taxon>Lysobacterales</taxon>
        <taxon>Lysobacteraceae</taxon>
        <taxon>Xanthomonas</taxon>
    </lineage>
</organism>